<keyword id="KW-0678">Repressor</keyword>
<keyword id="KW-0687">Ribonucleoprotein</keyword>
<keyword id="KW-0689">Ribosomal protein</keyword>
<keyword id="KW-0694">RNA-binding</keyword>
<keyword id="KW-0699">rRNA-binding</keyword>
<keyword id="KW-0810">Translation regulation</keyword>
<keyword id="KW-0820">tRNA-binding</keyword>
<protein>
    <recommendedName>
        <fullName evidence="1">Large ribosomal subunit protein uL1</fullName>
    </recommendedName>
    <alternativeName>
        <fullName evidence="2">50S ribosomal protein L1</fullName>
    </alternativeName>
</protein>
<reference key="1">
    <citation type="journal article" date="2000" name="DNA Res.">
        <title>Complete genome structure of the nitrogen-fixing symbiotic bacterium Mesorhizobium loti.</title>
        <authorList>
            <person name="Kaneko T."/>
            <person name="Nakamura Y."/>
            <person name="Sato S."/>
            <person name="Asamizu E."/>
            <person name="Kato T."/>
            <person name="Sasamoto S."/>
            <person name="Watanabe A."/>
            <person name="Idesawa K."/>
            <person name="Ishikawa A."/>
            <person name="Kawashima K."/>
            <person name="Kimura T."/>
            <person name="Kishida Y."/>
            <person name="Kiyokawa C."/>
            <person name="Kohara M."/>
            <person name="Matsumoto M."/>
            <person name="Matsuno A."/>
            <person name="Mochizuki Y."/>
            <person name="Nakayama S."/>
            <person name="Nakazaki N."/>
            <person name="Shimpo S."/>
            <person name="Sugimoto M."/>
            <person name="Takeuchi C."/>
            <person name="Yamada M."/>
            <person name="Tabata S."/>
        </authorList>
    </citation>
    <scope>NUCLEOTIDE SEQUENCE [LARGE SCALE GENOMIC DNA]</scope>
    <source>
        <strain>LMG 29417 / CECT 9101 / MAFF 303099</strain>
    </source>
</reference>
<evidence type="ECO:0000255" key="1">
    <source>
        <dbReference type="HAMAP-Rule" id="MF_01318"/>
    </source>
</evidence>
<evidence type="ECO:0000305" key="2"/>
<name>RL1_RHILO</name>
<accession>Q98N69</accession>
<sequence length="232" mass="24211">MAKIAKRVSKTREGIDPNKAYALGEALKLLKDRSSVKFDETVEVAMNLGVDPRHADQMVRGVVNLPNGTGRSVRVAVFARGDKAEEAKAAGADIVGAEDLVDIVQKGTIDFDRCIATPDMMPLVGRLGKVLGPRGMMPNPKVGTVTTDVAAAVKASKGGAVEFRVEKAGIVHAGVGKVSFDVKALEENIRAFADAVTKAKPAGAKGNYVKKVSVTSTMGPGLKLDVSTLAAS</sequence>
<comment type="function">
    <text evidence="1">Binds directly to 23S rRNA. The L1 stalk is quite mobile in the ribosome, and is involved in E site tRNA release.</text>
</comment>
<comment type="function">
    <text evidence="1">Protein L1 is also a translational repressor protein, it controls the translation of the L11 operon by binding to its mRNA.</text>
</comment>
<comment type="subunit">
    <text evidence="1">Part of the 50S ribosomal subunit.</text>
</comment>
<comment type="similarity">
    <text evidence="1">Belongs to the universal ribosomal protein uL1 family.</text>
</comment>
<dbReference type="EMBL" id="BA000012">
    <property type="protein sequence ID" value="BAB47893.1"/>
    <property type="molecule type" value="Genomic_DNA"/>
</dbReference>
<dbReference type="RefSeq" id="WP_010909263.1">
    <property type="nucleotide sequence ID" value="NC_002678.2"/>
</dbReference>
<dbReference type="SMR" id="Q98N69"/>
<dbReference type="KEGG" id="mlo:mlr0273"/>
<dbReference type="eggNOG" id="COG0081">
    <property type="taxonomic scope" value="Bacteria"/>
</dbReference>
<dbReference type="HOGENOM" id="CLU_062853_0_0_5"/>
<dbReference type="Proteomes" id="UP000000552">
    <property type="component" value="Chromosome"/>
</dbReference>
<dbReference type="GO" id="GO:0022625">
    <property type="term" value="C:cytosolic large ribosomal subunit"/>
    <property type="evidence" value="ECO:0007669"/>
    <property type="project" value="TreeGrafter"/>
</dbReference>
<dbReference type="GO" id="GO:0019843">
    <property type="term" value="F:rRNA binding"/>
    <property type="evidence" value="ECO:0007669"/>
    <property type="project" value="UniProtKB-UniRule"/>
</dbReference>
<dbReference type="GO" id="GO:0003735">
    <property type="term" value="F:structural constituent of ribosome"/>
    <property type="evidence" value="ECO:0007669"/>
    <property type="project" value="InterPro"/>
</dbReference>
<dbReference type="GO" id="GO:0000049">
    <property type="term" value="F:tRNA binding"/>
    <property type="evidence" value="ECO:0007669"/>
    <property type="project" value="UniProtKB-KW"/>
</dbReference>
<dbReference type="GO" id="GO:0006417">
    <property type="term" value="P:regulation of translation"/>
    <property type="evidence" value="ECO:0007669"/>
    <property type="project" value="UniProtKB-KW"/>
</dbReference>
<dbReference type="GO" id="GO:0006412">
    <property type="term" value="P:translation"/>
    <property type="evidence" value="ECO:0007669"/>
    <property type="project" value="UniProtKB-UniRule"/>
</dbReference>
<dbReference type="CDD" id="cd00403">
    <property type="entry name" value="Ribosomal_L1"/>
    <property type="match status" value="1"/>
</dbReference>
<dbReference type="FunFam" id="3.40.50.790:FF:000001">
    <property type="entry name" value="50S ribosomal protein L1"/>
    <property type="match status" value="1"/>
</dbReference>
<dbReference type="Gene3D" id="3.30.190.20">
    <property type="match status" value="1"/>
</dbReference>
<dbReference type="Gene3D" id="3.40.50.790">
    <property type="match status" value="1"/>
</dbReference>
<dbReference type="HAMAP" id="MF_01318_B">
    <property type="entry name" value="Ribosomal_uL1_B"/>
    <property type="match status" value="1"/>
</dbReference>
<dbReference type="InterPro" id="IPR005878">
    <property type="entry name" value="Ribosom_uL1_bac-type"/>
</dbReference>
<dbReference type="InterPro" id="IPR002143">
    <property type="entry name" value="Ribosomal_uL1"/>
</dbReference>
<dbReference type="InterPro" id="IPR023674">
    <property type="entry name" value="Ribosomal_uL1-like"/>
</dbReference>
<dbReference type="InterPro" id="IPR028364">
    <property type="entry name" value="Ribosomal_uL1/biogenesis"/>
</dbReference>
<dbReference type="InterPro" id="IPR016095">
    <property type="entry name" value="Ribosomal_uL1_3-a/b-sand"/>
</dbReference>
<dbReference type="InterPro" id="IPR023673">
    <property type="entry name" value="Ribosomal_uL1_CS"/>
</dbReference>
<dbReference type="NCBIfam" id="TIGR01169">
    <property type="entry name" value="rplA_bact"/>
    <property type="match status" value="1"/>
</dbReference>
<dbReference type="PANTHER" id="PTHR36427">
    <property type="entry name" value="54S RIBOSOMAL PROTEIN L1, MITOCHONDRIAL"/>
    <property type="match status" value="1"/>
</dbReference>
<dbReference type="PANTHER" id="PTHR36427:SF3">
    <property type="entry name" value="LARGE RIBOSOMAL SUBUNIT PROTEIN UL1M"/>
    <property type="match status" value="1"/>
</dbReference>
<dbReference type="Pfam" id="PF00687">
    <property type="entry name" value="Ribosomal_L1"/>
    <property type="match status" value="1"/>
</dbReference>
<dbReference type="PIRSF" id="PIRSF002155">
    <property type="entry name" value="Ribosomal_L1"/>
    <property type="match status" value="1"/>
</dbReference>
<dbReference type="SUPFAM" id="SSF56808">
    <property type="entry name" value="Ribosomal protein L1"/>
    <property type="match status" value="1"/>
</dbReference>
<dbReference type="PROSITE" id="PS01199">
    <property type="entry name" value="RIBOSOMAL_L1"/>
    <property type="match status" value="1"/>
</dbReference>
<proteinExistence type="inferred from homology"/>
<organism>
    <name type="scientific">Mesorhizobium japonicum (strain LMG 29417 / CECT 9101 / MAFF 303099)</name>
    <name type="common">Mesorhizobium loti (strain MAFF 303099)</name>
    <dbReference type="NCBI Taxonomy" id="266835"/>
    <lineage>
        <taxon>Bacteria</taxon>
        <taxon>Pseudomonadati</taxon>
        <taxon>Pseudomonadota</taxon>
        <taxon>Alphaproteobacteria</taxon>
        <taxon>Hyphomicrobiales</taxon>
        <taxon>Phyllobacteriaceae</taxon>
        <taxon>Mesorhizobium</taxon>
    </lineage>
</organism>
<gene>
    <name evidence="1" type="primary">rplA</name>
    <name type="ordered locus">mlr0273</name>
</gene>
<feature type="chain" id="PRO_0000125718" description="Large ribosomal subunit protein uL1">
    <location>
        <begin position="1"/>
        <end position="232"/>
    </location>
</feature>